<gene>
    <name evidence="1" type="primary">ubiG</name>
    <name type="ordered locus">BPP3136</name>
</gene>
<keyword id="KW-0489">Methyltransferase</keyword>
<keyword id="KW-0949">S-adenosyl-L-methionine</keyword>
<keyword id="KW-0808">Transferase</keyword>
<keyword id="KW-0831">Ubiquinone biosynthesis</keyword>
<organism>
    <name type="scientific">Bordetella parapertussis (strain 12822 / ATCC BAA-587 / NCTC 13253)</name>
    <dbReference type="NCBI Taxonomy" id="257311"/>
    <lineage>
        <taxon>Bacteria</taxon>
        <taxon>Pseudomonadati</taxon>
        <taxon>Pseudomonadota</taxon>
        <taxon>Betaproteobacteria</taxon>
        <taxon>Burkholderiales</taxon>
        <taxon>Alcaligenaceae</taxon>
        <taxon>Bordetella</taxon>
    </lineage>
</organism>
<accession>Q7W5Z6</accession>
<proteinExistence type="inferred from homology"/>
<feature type="chain" id="PRO_0000193369" description="Ubiquinone biosynthesis O-methyltransferase">
    <location>
        <begin position="1"/>
        <end position="241"/>
    </location>
</feature>
<feature type="binding site" evidence="1">
    <location>
        <position position="46"/>
    </location>
    <ligand>
        <name>S-adenosyl-L-methionine</name>
        <dbReference type="ChEBI" id="CHEBI:59789"/>
    </ligand>
</feature>
<feature type="binding site" evidence="1">
    <location>
        <position position="66"/>
    </location>
    <ligand>
        <name>S-adenosyl-L-methionine</name>
        <dbReference type="ChEBI" id="CHEBI:59789"/>
    </ligand>
</feature>
<feature type="binding site" evidence="1">
    <location>
        <position position="87"/>
    </location>
    <ligand>
        <name>S-adenosyl-L-methionine</name>
        <dbReference type="ChEBI" id="CHEBI:59789"/>
    </ligand>
</feature>
<feature type="binding site" evidence="1">
    <location>
        <position position="131"/>
    </location>
    <ligand>
        <name>S-adenosyl-L-methionine</name>
        <dbReference type="ChEBI" id="CHEBI:59789"/>
    </ligand>
</feature>
<protein>
    <recommendedName>
        <fullName evidence="1">Ubiquinone biosynthesis O-methyltransferase</fullName>
    </recommendedName>
    <alternativeName>
        <fullName evidence="1">2-polyprenyl-6-hydroxyphenol methylase</fullName>
        <ecNumber evidence="1">2.1.1.222</ecNumber>
    </alternativeName>
    <alternativeName>
        <fullName evidence="1">3-demethylubiquinone 3-O-methyltransferase</fullName>
        <ecNumber evidence="1">2.1.1.64</ecNumber>
    </alternativeName>
</protein>
<name>UBIG_BORPA</name>
<evidence type="ECO:0000255" key="1">
    <source>
        <dbReference type="HAMAP-Rule" id="MF_00472"/>
    </source>
</evidence>
<evidence type="ECO:0000305" key="2"/>
<sequence>MTTATQSSAPGVNVDQAEVEKFSALAARWWDPESEFKPLHAINPLRLGWIQETAGSLSGKRVLDVGCGGGILSESMAVAGAQVTGIDLAEKSLKIARLHGLESGVKVDYRAVPVEELAAEQPGQYDVVTCMEMLEHVPDPASVVRACAALAKPGRWVFFSTLNRNPKSFLFAIVGAEYVLRLLPRGTHSYDSFIKPSELAASARQAGLEPTGMRGMEYNPITQVYSLSANTSVNYLMSTRK</sequence>
<reference key="1">
    <citation type="journal article" date="2003" name="Nat. Genet.">
        <title>Comparative analysis of the genome sequences of Bordetella pertussis, Bordetella parapertussis and Bordetella bronchiseptica.</title>
        <authorList>
            <person name="Parkhill J."/>
            <person name="Sebaihia M."/>
            <person name="Preston A."/>
            <person name="Murphy L.D."/>
            <person name="Thomson N.R."/>
            <person name="Harris D.E."/>
            <person name="Holden M.T.G."/>
            <person name="Churcher C.M."/>
            <person name="Bentley S.D."/>
            <person name="Mungall K.L."/>
            <person name="Cerdeno-Tarraga A.-M."/>
            <person name="Temple L."/>
            <person name="James K.D."/>
            <person name="Harris B."/>
            <person name="Quail M.A."/>
            <person name="Achtman M."/>
            <person name="Atkin R."/>
            <person name="Baker S."/>
            <person name="Basham D."/>
            <person name="Bason N."/>
            <person name="Cherevach I."/>
            <person name="Chillingworth T."/>
            <person name="Collins M."/>
            <person name="Cronin A."/>
            <person name="Davis P."/>
            <person name="Doggett J."/>
            <person name="Feltwell T."/>
            <person name="Goble A."/>
            <person name="Hamlin N."/>
            <person name="Hauser H."/>
            <person name="Holroyd S."/>
            <person name="Jagels K."/>
            <person name="Leather S."/>
            <person name="Moule S."/>
            <person name="Norberczak H."/>
            <person name="O'Neil S."/>
            <person name="Ormond D."/>
            <person name="Price C."/>
            <person name="Rabbinowitsch E."/>
            <person name="Rutter S."/>
            <person name="Sanders M."/>
            <person name="Saunders D."/>
            <person name="Seeger K."/>
            <person name="Sharp S."/>
            <person name="Simmonds M."/>
            <person name="Skelton J."/>
            <person name="Squares R."/>
            <person name="Squares S."/>
            <person name="Stevens K."/>
            <person name="Unwin L."/>
            <person name="Whitehead S."/>
            <person name="Barrell B.G."/>
            <person name="Maskell D.J."/>
        </authorList>
    </citation>
    <scope>NUCLEOTIDE SEQUENCE [LARGE SCALE GENOMIC DNA]</scope>
    <source>
        <strain>12822 / ATCC BAA-587 / NCTC 13253</strain>
    </source>
</reference>
<comment type="function">
    <text evidence="1">O-methyltransferase that catalyzes the 2 O-methylation steps in the ubiquinone biosynthetic pathway.</text>
</comment>
<comment type="catalytic activity">
    <reaction evidence="1">
        <text>a 3-demethylubiquinol + S-adenosyl-L-methionine = a ubiquinol + S-adenosyl-L-homocysteine + H(+)</text>
        <dbReference type="Rhea" id="RHEA:44380"/>
        <dbReference type="Rhea" id="RHEA-COMP:9566"/>
        <dbReference type="Rhea" id="RHEA-COMP:10914"/>
        <dbReference type="ChEBI" id="CHEBI:15378"/>
        <dbReference type="ChEBI" id="CHEBI:17976"/>
        <dbReference type="ChEBI" id="CHEBI:57856"/>
        <dbReference type="ChEBI" id="CHEBI:59789"/>
        <dbReference type="ChEBI" id="CHEBI:84422"/>
        <dbReference type="EC" id="2.1.1.64"/>
    </reaction>
</comment>
<comment type="catalytic activity">
    <reaction evidence="1">
        <text>a 3-(all-trans-polyprenyl)benzene-1,2-diol + S-adenosyl-L-methionine = a 2-methoxy-6-(all-trans-polyprenyl)phenol + S-adenosyl-L-homocysteine + H(+)</text>
        <dbReference type="Rhea" id="RHEA:31411"/>
        <dbReference type="Rhea" id="RHEA-COMP:9550"/>
        <dbReference type="Rhea" id="RHEA-COMP:9551"/>
        <dbReference type="ChEBI" id="CHEBI:15378"/>
        <dbReference type="ChEBI" id="CHEBI:57856"/>
        <dbReference type="ChEBI" id="CHEBI:59789"/>
        <dbReference type="ChEBI" id="CHEBI:62729"/>
        <dbReference type="ChEBI" id="CHEBI:62731"/>
        <dbReference type="EC" id="2.1.1.222"/>
    </reaction>
</comment>
<comment type="pathway">
    <text evidence="1">Cofactor biosynthesis; ubiquinone biosynthesis.</text>
</comment>
<comment type="similarity">
    <text evidence="1">Belongs to the methyltransferase superfamily. UbiG/COQ3 family.</text>
</comment>
<comment type="sequence caution" evidence="2">
    <conflict type="erroneous initiation">
        <sequence resource="EMBL-CDS" id="CAE38421"/>
    </conflict>
</comment>
<dbReference type="EC" id="2.1.1.222" evidence="1"/>
<dbReference type="EC" id="2.1.1.64" evidence="1"/>
<dbReference type="EMBL" id="BX640432">
    <property type="protein sequence ID" value="CAE38421.1"/>
    <property type="status" value="ALT_INIT"/>
    <property type="molecule type" value="Genomic_DNA"/>
</dbReference>
<dbReference type="RefSeq" id="WP_041937252.1">
    <property type="nucleotide sequence ID" value="NC_002928.3"/>
</dbReference>
<dbReference type="SMR" id="Q7W5Z6"/>
<dbReference type="GeneID" id="93204917"/>
<dbReference type="KEGG" id="bpa:BPP3136"/>
<dbReference type="HOGENOM" id="CLU_042432_5_0_4"/>
<dbReference type="UniPathway" id="UPA00232"/>
<dbReference type="Proteomes" id="UP000001421">
    <property type="component" value="Chromosome"/>
</dbReference>
<dbReference type="GO" id="GO:0102208">
    <property type="term" value="F:2-polyprenyl-6-hydroxyphenol methylase activity"/>
    <property type="evidence" value="ECO:0007669"/>
    <property type="project" value="UniProtKB-EC"/>
</dbReference>
<dbReference type="GO" id="GO:0061542">
    <property type="term" value="F:3-demethylubiquinol 3-O-methyltransferase activity"/>
    <property type="evidence" value="ECO:0007669"/>
    <property type="project" value="UniProtKB-UniRule"/>
</dbReference>
<dbReference type="GO" id="GO:0010420">
    <property type="term" value="F:polyprenyldihydroxybenzoate methyltransferase activity"/>
    <property type="evidence" value="ECO:0007669"/>
    <property type="project" value="InterPro"/>
</dbReference>
<dbReference type="GO" id="GO:0032259">
    <property type="term" value="P:methylation"/>
    <property type="evidence" value="ECO:0007669"/>
    <property type="project" value="UniProtKB-KW"/>
</dbReference>
<dbReference type="CDD" id="cd02440">
    <property type="entry name" value="AdoMet_MTases"/>
    <property type="match status" value="1"/>
</dbReference>
<dbReference type="FunFam" id="3.40.50.150:FF:000028">
    <property type="entry name" value="Ubiquinone biosynthesis O-methyltransferase"/>
    <property type="match status" value="1"/>
</dbReference>
<dbReference type="Gene3D" id="3.40.50.150">
    <property type="entry name" value="Vaccinia Virus protein VP39"/>
    <property type="match status" value="1"/>
</dbReference>
<dbReference type="HAMAP" id="MF_00472">
    <property type="entry name" value="UbiG"/>
    <property type="match status" value="1"/>
</dbReference>
<dbReference type="InterPro" id="IPR029063">
    <property type="entry name" value="SAM-dependent_MTases_sf"/>
</dbReference>
<dbReference type="InterPro" id="IPR010233">
    <property type="entry name" value="UbiG_MeTrfase"/>
</dbReference>
<dbReference type="NCBIfam" id="TIGR01983">
    <property type="entry name" value="UbiG"/>
    <property type="match status" value="1"/>
</dbReference>
<dbReference type="PANTHER" id="PTHR43464">
    <property type="entry name" value="METHYLTRANSFERASE"/>
    <property type="match status" value="1"/>
</dbReference>
<dbReference type="PANTHER" id="PTHR43464:SF19">
    <property type="entry name" value="UBIQUINONE BIOSYNTHESIS O-METHYLTRANSFERASE, MITOCHONDRIAL"/>
    <property type="match status" value="1"/>
</dbReference>
<dbReference type="Pfam" id="PF13489">
    <property type="entry name" value="Methyltransf_23"/>
    <property type="match status" value="1"/>
</dbReference>
<dbReference type="SUPFAM" id="SSF53335">
    <property type="entry name" value="S-adenosyl-L-methionine-dependent methyltransferases"/>
    <property type="match status" value="1"/>
</dbReference>